<evidence type="ECO:0000255" key="1">
    <source>
        <dbReference type="HAMAP-Rule" id="MF_01367"/>
    </source>
</evidence>
<evidence type="ECO:0000305" key="2"/>
<feature type="chain" id="PRO_1000055719" description="Large ribosomal subunit protein uL14">
    <location>
        <begin position="1"/>
        <end position="122"/>
    </location>
</feature>
<reference key="1">
    <citation type="journal article" date="2006" name="Proc. Natl. Acad. Sci. U.S.A.">
        <title>Molecular genetic anatomy of inter- and intraserotype variation in the human bacterial pathogen group A Streptococcus.</title>
        <authorList>
            <person name="Beres S.B."/>
            <person name="Richter E.W."/>
            <person name="Nagiec M.J."/>
            <person name="Sumby P."/>
            <person name="Porcella S.F."/>
            <person name="DeLeo F.R."/>
            <person name="Musser J.M."/>
        </authorList>
    </citation>
    <scope>NUCLEOTIDE SEQUENCE [LARGE SCALE GENOMIC DNA]</scope>
    <source>
        <strain>MGAS2096</strain>
    </source>
</reference>
<sequence length="122" mass="13061">MIQQETRLKVADNSGAREILTIKVLGGSGRKFANIGDVIVASVKQATPGGAVKKGDVVKAVIVRTKTGARRPDGSYIKFDDNAAVIIRDDKTPRGTRIFGPVARELREGGYMKIVSLAPEVL</sequence>
<gene>
    <name evidence="1" type="primary">rplN</name>
    <name type="ordered locus">MGAS2096_Spy0058</name>
</gene>
<organism>
    <name type="scientific">Streptococcus pyogenes serotype M12 (strain MGAS2096)</name>
    <dbReference type="NCBI Taxonomy" id="370553"/>
    <lineage>
        <taxon>Bacteria</taxon>
        <taxon>Bacillati</taxon>
        <taxon>Bacillota</taxon>
        <taxon>Bacilli</taxon>
        <taxon>Lactobacillales</taxon>
        <taxon>Streptococcaceae</taxon>
        <taxon>Streptococcus</taxon>
    </lineage>
</organism>
<name>RL14_STRPB</name>
<keyword id="KW-0687">Ribonucleoprotein</keyword>
<keyword id="KW-0689">Ribosomal protein</keyword>
<keyword id="KW-0694">RNA-binding</keyword>
<keyword id="KW-0699">rRNA-binding</keyword>
<comment type="function">
    <text evidence="1">Binds to 23S rRNA. Forms part of two intersubunit bridges in the 70S ribosome.</text>
</comment>
<comment type="subunit">
    <text evidence="1">Part of the 50S ribosomal subunit. Forms a cluster with proteins L3 and L19. In the 70S ribosome, L14 and L19 interact and together make contacts with the 16S rRNA in bridges B5 and B8.</text>
</comment>
<comment type="similarity">
    <text evidence="1">Belongs to the universal ribosomal protein uL14 family.</text>
</comment>
<accession>Q1JE48</accession>
<protein>
    <recommendedName>
        <fullName evidence="1">Large ribosomal subunit protein uL14</fullName>
    </recommendedName>
    <alternativeName>
        <fullName evidence="2">50S ribosomal protein L14</fullName>
    </alternativeName>
</protein>
<proteinExistence type="inferred from homology"/>
<dbReference type="EMBL" id="CP000261">
    <property type="protein sequence ID" value="ABF35110.1"/>
    <property type="molecule type" value="Genomic_DNA"/>
</dbReference>
<dbReference type="SMR" id="Q1JE48"/>
<dbReference type="KEGG" id="spj:MGAS2096_Spy0058"/>
<dbReference type="HOGENOM" id="CLU_095071_2_1_9"/>
<dbReference type="GO" id="GO:0022625">
    <property type="term" value="C:cytosolic large ribosomal subunit"/>
    <property type="evidence" value="ECO:0007669"/>
    <property type="project" value="TreeGrafter"/>
</dbReference>
<dbReference type="GO" id="GO:0070180">
    <property type="term" value="F:large ribosomal subunit rRNA binding"/>
    <property type="evidence" value="ECO:0007669"/>
    <property type="project" value="TreeGrafter"/>
</dbReference>
<dbReference type="GO" id="GO:0003735">
    <property type="term" value="F:structural constituent of ribosome"/>
    <property type="evidence" value="ECO:0007669"/>
    <property type="project" value="InterPro"/>
</dbReference>
<dbReference type="GO" id="GO:0006412">
    <property type="term" value="P:translation"/>
    <property type="evidence" value="ECO:0007669"/>
    <property type="project" value="UniProtKB-UniRule"/>
</dbReference>
<dbReference type="CDD" id="cd00337">
    <property type="entry name" value="Ribosomal_uL14"/>
    <property type="match status" value="1"/>
</dbReference>
<dbReference type="FunFam" id="2.40.150.20:FF:000001">
    <property type="entry name" value="50S ribosomal protein L14"/>
    <property type="match status" value="1"/>
</dbReference>
<dbReference type="Gene3D" id="2.40.150.20">
    <property type="entry name" value="Ribosomal protein L14"/>
    <property type="match status" value="1"/>
</dbReference>
<dbReference type="HAMAP" id="MF_01367">
    <property type="entry name" value="Ribosomal_uL14"/>
    <property type="match status" value="1"/>
</dbReference>
<dbReference type="InterPro" id="IPR000218">
    <property type="entry name" value="Ribosomal_uL14"/>
</dbReference>
<dbReference type="InterPro" id="IPR005745">
    <property type="entry name" value="Ribosomal_uL14_bac-type"/>
</dbReference>
<dbReference type="InterPro" id="IPR019972">
    <property type="entry name" value="Ribosomal_uL14_CS"/>
</dbReference>
<dbReference type="InterPro" id="IPR036853">
    <property type="entry name" value="Ribosomal_uL14_sf"/>
</dbReference>
<dbReference type="NCBIfam" id="TIGR01067">
    <property type="entry name" value="rplN_bact"/>
    <property type="match status" value="1"/>
</dbReference>
<dbReference type="PANTHER" id="PTHR11761">
    <property type="entry name" value="50S/60S RIBOSOMAL PROTEIN L14/L23"/>
    <property type="match status" value="1"/>
</dbReference>
<dbReference type="PANTHER" id="PTHR11761:SF3">
    <property type="entry name" value="LARGE RIBOSOMAL SUBUNIT PROTEIN UL14M"/>
    <property type="match status" value="1"/>
</dbReference>
<dbReference type="Pfam" id="PF00238">
    <property type="entry name" value="Ribosomal_L14"/>
    <property type="match status" value="1"/>
</dbReference>
<dbReference type="SMART" id="SM01374">
    <property type="entry name" value="Ribosomal_L14"/>
    <property type="match status" value="1"/>
</dbReference>
<dbReference type="SUPFAM" id="SSF50193">
    <property type="entry name" value="Ribosomal protein L14"/>
    <property type="match status" value="1"/>
</dbReference>
<dbReference type="PROSITE" id="PS00049">
    <property type="entry name" value="RIBOSOMAL_L14"/>
    <property type="match status" value="1"/>
</dbReference>